<gene>
    <name type="primary">csnk2b</name>
    <name type="synonym">ck2b</name>
</gene>
<name>CSK2B_DANRE</name>
<keyword id="KW-0479">Metal-binding</keyword>
<keyword id="KW-0539">Nucleus</keyword>
<keyword id="KW-0597">Phosphoprotein</keyword>
<keyword id="KW-1185">Reference proteome</keyword>
<keyword id="KW-0879">Wnt signaling pathway</keyword>
<keyword id="KW-0862">Zinc</keyword>
<accession>Q91398</accession>
<feature type="chain" id="PRO_0000068243" description="Casein kinase II subunit beta">
    <location>
        <begin position="1"/>
        <end position="215"/>
    </location>
</feature>
<feature type="region of interest" description="Interaction with alpha subunit" evidence="1">
    <location>
        <begin position="188"/>
        <end position="193"/>
    </location>
</feature>
<feature type="short sequence motif" description="KSSR motif" evidence="2">
    <location>
        <begin position="147"/>
        <end position="150"/>
    </location>
</feature>
<feature type="binding site" evidence="1">
    <location>
        <position position="109"/>
    </location>
    <ligand>
        <name>Zn(2+)</name>
        <dbReference type="ChEBI" id="CHEBI:29105"/>
    </ligand>
</feature>
<feature type="binding site" evidence="1">
    <location>
        <position position="114"/>
    </location>
    <ligand>
        <name>Zn(2+)</name>
        <dbReference type="ChEBI" id="CHEBI:29105"/>
    </ligand>
</feature>
<feature type="binding site" evidence="1">
    <location>
        <position position="137"/>
    </location>
    <ligand>
        <name>Zn(2+)</name>
        <dbReference type="ChEBI" id="CHEBI:29105"/>
    </ligand>
</feature>
<feature type="binding site" evidence="1">
    <location>
        <position position="140"/>
    </location>
    <ligand>
        <name>Zn(2+)</name>
        <dbReference type="ChEBI" id="CHEBI:29105"/>
    </ligand>
</feature>
<proteinExistence type="evidence at transcript level"/>
<organism>
    <name type="scientific">Danio rerio</name>
    <name type="common">Zebrafish</name>
    <name type="synonym">Brachydanio rerio</name>
    <dbReference type="NCBI Taxonomy" id="7955"/>
    <lineage>
        <taxon>Eukaryota</taxon>
        <taxon>Metazoa</taxon>
        <taxon>Chordata</taxon>
        <taxon>Craniata</taxon>
        <taxon>Vertebrata</taxon>
        <taxon>Euteleostomi</taxon>
        <taxon>Actinopterygii</taxon>
        <taxon>Neopterygii</taxon>
        <taxon>Teleostei</taxon>
        <taxon>Ostariophysi</taxon>
        <taxon>Cypriniformes</taxon>
        <taxon>Danionidae</taxon>
        <taxon>Danioninae</taxon>
        <taxon>Danio</taxon>
    </lineage>
</organism>
<protein>
    <recommendedName>
        <fullName>Casein kinase II subunit beta</fullName>
        <shortName>CK II beta</shortName>
    </recommendedName>
</protein>
<reference key="1">
    <citation type="journal article" date="1994" name="Cell. Mol. Biol. Res.">
        <title>Cloning and expression of genes coding for protein kinase CK2 alpha and beta subunits in zebrafish (Danio rerio).</title>
        <authorList>
            <person name="Daniotti J.L."/>
            <person name="Allende M.L."/>
            <person name="Weinberg E.S."/>
            <person name="Allende J.E."/>
        </authorList>
    </citation>
    <scope>NUCLEOTIDE SEQUENCE [MRNA]</scope>
</reference>
<evidence type="ECO:0000250" key="1"/>
<evidence type="ECO:0000250" key="2">
    <source>
        <dbReference type="UniProtKB" id="P67870"/>
    </source>
</evidence>
<evidence type="ECO:0000250" key="3">
    <source>
        <dbReference type="UniProtKB" id="P67871"/>
    </source>
</evidence>
<evidence type="ECO:0000305" key="4"/>
<sequence length="215" mass="24885">MSSSEEVSWISWFCGLRGNEFFCEVDEDYIQDKFNLTGLNEQVPHYRQALDMILDLEPDEELEDNPNQSDLIEQAAEMLYGLIHARYILTNRGIAQMLEKYQQGDFGYCPRVYCENQPMLPIGLSDIPGEAMVKLYCPKCMDVYTPKSSRHHHTDGAYFGTGFPHMLFMVHPEYRPKRPANQFVPRLYGFKIHPMAYQLQLQAASSFKSPVKAIR</sequence>
<dbReference type="EMBL" id="S76877">
    <property type="protein sequence ID" value="AAB34249.1"/>
    <property type="molecule type" value="mRNA"/>
</dbReference>
<dbReference type="RefSeq" id="NP_571262.1">
    <property type="nucleotide sequence ID" value="NM_131187.1"/>
</dbReference>
<dbReference type="RefSeq" id="XP_005170056.1">
    <property type="nucleotide sequence ID" value="XM_005169999.5"/>
</dbReference>
<dbReference type="SMR" id="Q91398"/>
<dbReference type="BioGRID" id="78614">
    <property type="interactions" value="1"/>
</dbReference>
<dbReference type="FunCoup" id="Q91398">
    <property type="interactions" value="2786"/>
</dbReference>
<dbReference type="STRING" id="7955.ENSDARP00000098474"/>
<dbReference type="PaxDb" id="7955-ENSDARP00000098474"/>
<dbReference type="Ensembl" id="ENSDART00000109258">
    <property type="protein sequence ID" value="ENSDARP00000098474"/>
    <property type="gene ID" value="ENSDARG00000077776"/>
</dbReference>
<dbReference type="Ensembl" id="ENSDART00000182802">
    <property type="protein sequence ID" value="ENSDARP00000146410"/>
    <property type="gene ID" value="ENSDARG00000077776"/>
</dbReference>
<dbReference type="GeneID" id="30428"/>
<dbReference type="KEGG" id="dre:30428"/>
<dbReference type="AGR" id="ZFIN:ZDB-GENE-990415-29"/>
<dbReference type="CTD" id="1460"/>
<dbReference type="ZFIN" id="ZDB-GENE-990415-29">
    <property type="gene designation" value="csnk2b"/>
</dbReference>
<dbReference type="eggNOG" id="KOG3092">
    <property type="taxonomic scope" value="Eukaryota"/>
</dbReference>
<dbReference type="HOGENOM" id="CLU_034027_3_3_1"/>
<dbReference type="InParanoid" id="Q91398"/>
<dbReference type="OMA" id="DADFGRC"/>
<dbReference type="OrthoDB" id="3971593at2759"/>
<dbReference type="PhylomeDB" id="Q91398"/>
<dbReference type="TreeFam" id="TF314462"/>
<dbReference type="Reactome" id="R-DRE-6798695">
    <property type="pathway name" value="Neutrophil degranulation"/>
</dbReference>
<dbReference type="CD-CODE" id="DD98A56E">
    <property type="entry name" value="Balbiani body"/>
</dbReference>
<dbReference type="PRO" id="PR:Q91398"/>
<dbReference type="Proteomes" id="UP000000437">
    <property type="component" value="Chromosome 19"/>
</dbReference>
<dbReference type="Bgee" id="ENSDARG00000077776">
    <property type="expression patterns" value="Expressed in testis and 29 other cell types or tissues"/>
</dbReference>
<dbReference type="ExpressionAtlas" id="Q91398">
    <property type="expression patterns" value="baseline and differential"/>
</dbReference>
<dbReference type="GO" id="GO:0005737">
    <property type="term" value="C:cytoplasm"/>
    <property type="evidence" value="ECO:0000318"/>
    <property type="project" value="GO_Central"/>
</dbReference>
<dbReference type="GO" id="GO:0005634">
    <property type="term" value="C:nucleus"/>
    <property type="evidence" value="ECO:0007669"/>
    <property type="project" value="UniProtKB-SubCell"/>
</dbReference>
<dbReference type="GO" id="GO:0005956">
    <property type="term" value="C:protein kinase CK2 complex"/>
    <property type="evidence" value="ECO:0000318"/>
    <property type="project" value="GO_Central"/>
</dbReference>
<dbReference type="GO" id="GO:0046872">
    <property type="term" value="F:metal ion binding"/>
    <property type="evidence" value="ECO:0007669"/>
    <property type="project" value="UniProtKB-KW"/>
</dbReference>
<dbReference type="GO" id="GO:0019887">
    <property type="term" value="F:protein kinase regulator activity"/>
    <property type="evidence" value="ECO:0000318"/>
    <property type="project" value="GO_Central"/>
</dbReference>
<dbReference type="GO" id="GO:0030218">
    <property type="term" value="P:erythrocyte differentiation"/>
    <property type="evidence" value="ECO:0000315"/>
    <property type="project" value="ZFIN"/>
</dbReference>
<dbReference type="GO" id="GO:0016055">
    <property type="term" value="P:Wnt signaling pathway"/>
    <property type="evidence" value="ECO:0007669"/>
    <property type="project" value="UniProtKB-KW"/>
</dbReference>
<dbReference type="FunFam" id="1.10.1820.10:FF:000001">
    <property type="entry name" value="Casein kinase II subunit beta"/>
    <property type="match status" value="1"/>
</dbReference>
<dbReference type="FunFam" id="2.20.25.20:FF:000002">
    <property type="entry name" value="Casein kinase II subunit beta"/>
    <property type="match status" value="1"/>
</dbReference>
<dbReference type="Gene3D" id="2.20.25.20">
    <property type="match status" value="1"/>
</dbReference>
<dbReference type="Gene3D" id="1.10.1820.10">
    <property type="entry name" value="protein kinase ck2 holoenzyme, chain C, domain 1"/>
    <property type="match status" value="1"/>
</dbReference>
<dbReference type="InterPro" id="IPR016149">
    <property type="entry name" value="Casein_kin_II_reg-sub_N"/>
</dbReference>
<dbReference type="InterPro" id="IPR035991">
    <property type="entry name" value="Casein_kinase_II_beta-like"/>
</dbReference>
<dbReference type="InterPro" id="IPR000704">
    <property type="entry name" value="Casein_kinase_II_reg-sub"/>
</dbReference>
<dbReference type="PANTHER" id="PTHR11740">
    <property type="entry name" value="CASEIN KINASE II SUBUNIT BETA"/>
    <property type="match status" value="1"/>
</dbReference>
<dbReference type="PANTHER" id="PTHR11740:SF0">
    <property type="entry name" value="CASEIN KINASE II SUBUNIT BETA"/>
    <property type="match status" value="1"/>
</dbReference>
<dbReference type="Pfam" id="PF01214">
    <property type="entry name" value="CK_II_beta"/>
    <property type="match status" value="1"/>
</dbReference>
<dbReference type="PRINTS" id="PR00472">
    <property type="entry name" value="CASNKINASEII"/>
</dbReference>
<dbReference type="SMART" id="SM01085">
    <property type="entry name" value="CK_II_beta"/>
    <property type="match status" value="1"/>
</dbReference>
<dbReference type="SUPFAM" id="SSF57798">
    <property type="entry name" value="Casein kinase II beta subunit"/>
    <property type="match status" value="1"/>
</dbReference>
<dbReference type="PROSITE" id="PS01101">
    <property type="entry name" value="CK2_BETA"/>
    <property type="match status" value="1"/>
</dbReference>
<comment type="function">
    <text evidence="2 3">Regulatory subunit of casein kinase II/CK2. As part of the kinase complex regulates the basal catalytic activity of the alpha subunit a constitutively active serine/threonine-protein kinase that phosphorylates a large number of substrates containing acidic residues C-terminal to the phosphorylated serine or threonine (By similarity). Participates in Wnt signaling (By similarity).</text>
</comment>
<comment type="subunit">
    <text evidence="1 2">Casein kinase II/CK2 is a tetramer composed of two alpha subunits and two beta subunits. The beta subunit dimerization is mediated by zinc ions.</text>
</comment>
<comment type="subcellular location">
    <subcellularLocation>
        <location evidence="2">Nucleus</location>
    </subcellularLocation>
</comment>
<comment type="domain">
    <text evidence="2">The KSSR motif is part of a protein interaction pocket that mediates interaction with cellular and viral proteins.</text>
</comment>
<comment type="PTM">
    <text evidence="1">Phosphorylated by alpha subunit.</text>
</comment>
<comment type="similarity">
    <text evidence="4">Belongs to the casein kinase 2 subunit beta family.</text>
</comment>